<reference key="1">
    <citation type="journal article" date="2003" name="Science">
        <title>Role of mobile DNA in the evolution of vancomycin-resistant Enterococcus faecalis.</title>
        <authorList>
            <person name="Paulsen I.T."/>
            <person name="Banerjei L."/>
            <person name="Myers G.S.A."/>
            <person name="Nelson K.E."/>
            <person name="Seshadri R."/>
            <person name="Read T.D."/>
            <person name="Fouts D.E."/>
            <person name="Eisen J.A."/>
            <person name="Gill S.R."/>
            <person name="Heidelberg J.F."/>
            <person name="Tettelin H."/>
            <person name="Dodson R.J."/>
            <person name="Umayam L.A."/>
            <person name="Brinkac L.M."/>
            <person name="Beanan M.J."/>
            <person name="Daugherty S.C."/>
            <person name="DeBoy R.T."/>
            <person name="Durkin S.A."/>
            <person name="Kolonay J.F."/>
            <person name="Madupu R."/>
            <person name="Nelson W.C."/>
            <person name="Vamathevan J.J."/>
            <person name="Tran B."/>
            <person name="Upton J."/>
            <person name="Hansen T."/>
            <person name="Shetty J."/>
            <person name="Khouri H.M."/>
            <person name="Utterback T.R."/>
            <person name="Radune D."/>
            <person name="Ketchum K.A."/>
            <person name="Dougherty B.A."/>
            <person name="Fraser C.M."/>
        </authorList>
    </citation>
    <scope>NUCLEOTIDE SEQUENCE [LARGE SCALE GENOMIC DNA]</scope>
    <source>
        <strain>ATCC 700802 / V583</strain>
    </source>
</reference>
<accession>Q834G2</accession>
<name>RNZ_ENTFA</name>
<dbReference type="EC" id="3.1.26.11" evidence="1"/>
<dbReference type="EMBL" id="AE016830">
    <property type="protein sequence ID" value="AAO81469.1"/>
    <property type="molecule type" value="Genomic_DNA"/>
</dbReference>
<dbReference type="RefSeq" id="NP_815399.1">
    <property type="nucleotide sequence ID" value="NC_004668.1"/>
</dbReference>
<dbReference type="RefSeq" id="WP_002360200.1">
    <property type="nucleotide sequence ID" value="NZ_KE136528.1"/>
</dbReference>
<dbReference type="SMR" id="Q834G2"/>
<dbReference type="STRING" id="226185.EF_1691"/>
<dbReference type="EnsemblBacteria" id="AAO81469">
    <property type="protein sequence ID" value="AAO81469"/>
    <property type="gene ID" value="EF_1691"/>
</dbReference>
<dbReference type="GeneID" id="60893989"/>
<dbReference type="KEGG" id="efa:EF1691"/>
<dbReference type="PATRIC" id="fig|226185.45.peg.1819"/>
<dbReference type="eggNOG" id="COG1234">
    <property type="taxonomic scope" value="Bacteria"/>
</dbReference>
<dbReference type="HOGENOM" id="CLU_031317_2_0_9"/>
<dbReference type="Proteomes" id="UP000001415">
    <property type="component" value="Chromosome"/>
</dbReference>
<dbReference type="GO" id="GO:0042781">
    <property type="term" value="F:3'-tRNA processing endoribonuclease activity"/>
    <property type="evidence" value="ECO:0007669"/>
    <property type="project" value="UniProtKB-UniRule"/>
</dbReference>
<dbReference type="GO" id="GO:0008270">
    <property type="term" value="F:zinc ion binding"/>
    <property type="evidence" value="ECO:0007669"/>
    <property type="project" value="UniProtKB-UniRule"/>
</dbReference>
<dbReference type="CDD" id="cd07717">
    <property type="entry name" value="RNaseZ_ZiPD-like_MBL-fold"/>
    <property type="match status" value="1"/>
</dbReference>
<dbReference type="FunFam" id="3.60.15.10:FF:000002">
    <property type="entry name" value="Ribonuclease Z"/>
    <property type="match status" value="1"/>
</dbReference>
<dbReference type="Gene3D" id="3.60.15.10">
    <property type="entry name" value="Ribonuclease Z/Hydroxyacylglutathione hydrolase-like"/>
    <property type="match status" value="1"/>
</dbReference>
<dbReference type="HAMAP" id="MF_01818">
    <property type="entry name" value="RNase_Z_BN"/>
    <property type="match status" value="1"/>
</dbReference>
<dbReference type="InterPro" id="IPR001279">
    <property type="entry name" value="Metallo-B-lactamas"/>
</dbReference>
<dbReference type="InterPro" id="IPR036866">
    <property type="entry name" value="RibonucZ/Hydroxyglut_hydro"/>
</dbReference>
<dbReference type="InterPro" id="IPR013471">
    <property type="entry name" value="RNase_Z/BN"/>
</dbReference>
<dbReference type="NCBIfam" id="NF000801">
    <property type="entry name" value="PRK00055.1-3"/>
    <property type="match status" value="1"/>
</dbReference>
<dbReference type="NCBIfam" id="TIGR02651">
    <property type="entry name" value="RNase_Z"/>
    <property type="match status" value="1"/>
</dbReference>
<dbReference type="PANTHER" id="PTHR46018">
    <property type="entry name" value="ZINC PHOSPHODIESTERASE ELAC PROTEIN 1"/>
    <property type="match status" value="1"/>
</dbReference>
<dbReference type="PANTHER" id="PTHR46018:SF2">
    <property type="entry name" value="ZINC PHOSPHODIESTERASE ELAC PROTEIN 1"/>
    <property type="match status" value="1"/>
</dbReference>
<dbReference type="Pfam" id="PF00753">
    <property type="entry name" value="Lactamase_B"/>
    <property type="match status" value="1"/>
</dbReference>
<dbReference type="SUPFAM" id="SSF56281">
    <property type="entry name" value="Metallo-hydrolase/oxidoreductase"/>
    <property type="match status" value="1"/>
</dbReference>
<evidence type="ECO:0000255" key="1">
    <source>
        <dbReference type="HAMAP-Rule" id="MF_01818"/>
    </source>
</evidence>
<proteinExistence type="inferred from homology"/>
<sequence>MEIQFLGTGAGVPAKHRNVTGIALKLLDERNAVWLFDCGEGTQLQILKSSIRPRKIEKIFITHLHGDHIFGLPGLLSSRSFQGGTEPLEIYGPVGIADFVKTSLRVSQSRLSYPLKFIELTKENDVIFKDKQFTVRCNILDHGITSFGYRIEEAAHEGELQVEKLQALGIPSGPLYGKLKRGETIVFDGQEINGQAFVGERKPGRIVTILGDTRKTKNSVTLARRADVLVHESTFNKHEAKMAKAYFHSTSQQAAEVAKEAQVKQLILTHISARYLTKEAYQLQEEAQEIFPNTKIVKDMDIIEIPFANEGGA</sequence>
<comment type="function">
    <text evidence="1">Zinc phosphodiesterase, which displays some tRNA 3'-processing endonuclease activity. Probably involved in tRNA maturation, by removing a 3'-trailer from precursor tRNA.</text>
</comment>
<comment type="catalytic activity">
    <reaction evidence="1">
        <text>Endonucleolytic cleavage of RNA, removing extra 3' nucleotides from tRNA precursor, generating 3' termini of tRNAs. A 3'-hydroxy group is left at the tRNA terminus and a 5'-phosphoryl group is left at the trailer molecule.</text>
        <dbReference type="EC" id="3.1.26.11"/>
    </reaction>
</comment>
<comment type="cofactor">
    <cofactor evidence="1">
        <name>Zn(2+)</name>
        <dbReference type="ChEBI" id="CHEBI:29105"/>
    </cofactor>
    <text evidence="1">Binds 2 Zn(2+) ions.</text>
</comment>
<comment type="subunit">
    <text evidence="1">Homodimer.</text>
</comment>
<comment type="similarity">
    <text evidence="1">Belongs to the RNase Z family.</text>
</comment>
<keyword id="KW-0255">Endonuclease</keyword>
<keyword id="KW-0378">Hydrolase</keyword>
<keyword id="KW-0479">Metal-binding</keyword>
<keyword id="KW-0540">Nuclease</keyword>
<keyword id="KW-1185">Reference proteome</keyword>
<keyword id="KW-0819">tRNA processing</keyword>
<keyword id="KW-0862">Zinc</keyword>
<feature type="chain" id="PRO_0000155866" description="Ribonuclease Z">
    <location>
        <begin position="1"/>
        <end position="313"/>
    </location>
</feature>
<feature type="active site" description="Proton acceptor" evidence="1">
    <location>
        <position position="67"/>
    </location>
</feature>
<feature type="binding site" evidence="1">
    <location>
        <position position="63"/>
    </location>
    <ligand>
        <name>Zn(2+)</name>
        <dbReference type="ChEBI" id="CHEBI:29105"/>
        <label>1</label>
        <note>catalytic</note>
    </ligand>
</feature>
<feature type="binding site" evidence="1">
    <location>
        <position position="65"/>
    </location>
    <ligand>
        <name>Zn(2+)</name>
        <dbReference type="ChEBI" id="CHEBI:29105"/>
        <label>1</label>
        <note>catalytic</note>
    </ligand>
</feature>
<feature type="binding site" evidence="1">
    <location>
        <position position="67"/>
    </location>
    <ligand>
        <name>Zn(2+)</name>
        <dbReference type="ChEBI" id="CHEBI:29105"/>
        <label>2</label>
        <note>catalytic</note>
    </ligand>
</feature>
<feature type="binding site" evidence="1">
    <location>
        <position position="68"/>
    </location>
    <ligand>
        <name>Zn(2+)</name>
        <dbReference type="ChEBI" id="CHEBI:29105"/>
        <label>2</label>
        <note>catalytic</note>
    </ligand>
</feature>
<feature type="binding site" evidence="1">
    <location>
        <position position="142"/>
    </location>
    <ligand>
        <name>Zn(2+)</name>
        <dbReference type="ChEBI" id="CHEBI:29105"/>
        <label>1</label>
        <note>catalytic</note>
    </ligand>
</feature>
<feature type="binding site" evidence="1">
    <location>
        <position position="212"/>
    </location>
    <ligand>
        <name>Zn(2+)</name>
        <dbReference type="ChEBI" id="CHEBI:29105"/>
        <label>1</label>
        <note>catalytic</note>
    </ligand>
</feature>
<feature type="binding site" evidence="1">
    <location>
        <position position="212"/>
    </location>
    <ligand>
        <name>Zn(2+)</name>
        <dbReference type="ChEBI" id="CHEBI:29105"/>
        <label>2</label>
        <note>catalytic</note>
    </ligand>
</feature>
<feature type="binding site" evidence="1">
    <location>
        <position position="270"/>
    </location>
    <ligand>
        <name>Zn(2+)</name>
        <dbReference type="ChEBI" id="CHEBI:29105"/>
        <label>2</label>
        <note>catalytic</note>
    </ligand>
</feature>
<organism>
    <name type="scientific">Enterococcus faecalis (strain ATCC 700802 / V583)</name>
    <dbReference type="NCBI Taxonomy" id="226185"/>
    <lineage>
        <taxon>Bacteria</taxon>
        <taxon>Bacillati</taxon>
        <taxon>Bacillota</taxon>
        <taxon>Bacilli</taxon>
        <taxon>Lactobacillales</taxon>
        <taxon>Enterococcaceae</taxon>
        <taxon>Enterococcus</taxon>
    </lineage>
</organism>
<gene>
    <name evidence="1" type="primary">rnz</name>
    <name type="ordered locus">EF_1691</name>
</gene>
<protein>
    <recommendedName>
        <fullName evidence="1">Ribonuclease Z</fullName>
        <shortName evidence="1">RNase Z</shortName>
        <ecNumber evidence="1">3.1.26.11</ecNumber>
    </recommendedName>
    <alternativeName>
        <fullName evidence="1">tRNA 3 endonuclease</fullName>
    </alternativeName>
    <alternativeName>
        <fullName evidence="1">tRNase Z</fullName>
    </alternativeName>
</protein>